<name>RL29_SULNB</name>
<accession>A6QCQ6</accession>
<sequence>MNYIDLKDKSEAELLAMLKEKKLELFTLNAKQKTMQLTNTSELRVAKKDIARIQTALTAARAK</sequence>
<dbReference type="EMBL" id="AP009179">
    <property type="protein sequence ID" value="BAF73265.1"/>
    <property type="molecule type" value="Genomic_DNA"/>
</dbReference>
<dbReference type="RefSeq" id="WP_012084104.1">
    <property type="nucleotide sequence ID" value="NC_009663.1"/>
</dbReference>
<dbReference type="SMR" id="A6QCQ6"/>
<dbReference type="STRING" id="387093.SUN_2329"/>
<dbReference type="KEGG" id="sun:SUN_2329"/>
<dbReference type="eggNOG" id="COG0255">
    <property type="taxonomic scope" value="Bacteria"/>
</dbReference>
<dbReference type="HOGENOM" id="CLU_158491_7_1_7"/>
<dbReference type="OrthoDB" id="5373225at2"/>
<dbReference type="Proteomes" id="UP000006378">
    <property type="component" value="Chromosome"/>
</dbReference>
<dbReference type="GO" id="GO:1990904">
    <property type="term" value="C:ribonucleoprotein complex"/>
    <property type="evidence" value="ECO:0007669"/>
    <property type="project" value="UniProtKB-KW"/>
</dbReference>
<dbReference type="GO" id="GO:0005840">
    <property type="term" value="C:ribosome"/>
    <property type="evidence" value="ECO:0007669"/>
    <property type="project" value="UniProtKB-KW"/>
</dbReference>
<dbReference type="GO" id="GO:0003735">
    <property type="term" value="F:structural constituent of ribosome"/>
    <property type="evidence" value="ECO:0007669"/>
    <property type="project" value="InterPro"/>
</dbReference>
<dbReference type="GO" id="GO:0006412">
    <property type="term" value="P:translation"/>
    <property type="evidence" value="ECO:0007669"/>
    <property type="project" value="UniProtKB-UniRule"/>
</dbReference>
<dbReference type="CDD" id="cd00427">
    <property type="entry name" value="Ribosomal_L29_HIP"/>
    <property type="match status" value="1"/>
</dbReference>
<dbReference type="Gene3D" id="1.10.287.310">
    <property type="match status" value="1"/>
</dbReference>
<dbReference type="HAMAP" id="MF_00374">
    <property type="entry name" value="Ribosomal_uL29"/>
    <property type="match status" value="1"/>
</dbReference>
<dbReference type="InterPro" id="IPR001854">
    <property type="entry name" value="Ribosomal_uL29"/>
</dbReference>
<dbReference type="InterPro" id="IPR018254">
    <property type="entry name" value="Ribosomal_uL29_CS"/>
</dbReference>
<dbReference type="InterPro" id="IPR036049">
    <property type="entry name" value="Ribosomal_uL29_sf"/>
</dbReference>
<dbReference type="NCBIfam" id="TIGR00012">
    <property type="entry name" value="L29"/>
    <property type="match status" value="1"/>
</dbReference>
<dbReference type="Pfam" id="PF00831">
    <property type="entry name" value="Ribosomal_L29"/>
    <property type="match status" value="1"/>
</dbReference>
<dbReference type="SUPFAM" id="SSF46561">
    <property type="entry name" value="Ribosomal protein L29 (L29p)"/>
    <property type="match status" value="1"/>
</dbReference>
<dbReference type="PROSITE" id="PS00579">
    <property type="entry name" value="RIBOSOMAL_L29"/>
    <property type="match status" value="1"/>
</dbReference>
<feature type="chain" id="PRO_1000007634" description="Large ribosomal subunit protein uL29">
    <location>
        <begin position="1"/>
        <end position="63"/>
    </location>
</feature>
<keyword id="KW-0687">Ribonucleoprotein</keyword>
<keyword id="KW-0689">Ribosomal protein</keyword>
<organism>
    <name type="scientific">Sulfurovum sp. (strain NBC37-1)</name>
    <dbReference type="NCBI Taxonomy" id="387093"/>
    <lineage>
        <taxon>Bacteria</taxon>
        <taxon>Pseudomonadati</taxon>
        <taxon>Campylobacterota</taxon>
        <taxon>Epsilonproteobacteria</taxon>
        <taxon>Campylobacterales</taxon>
        <taxon>Sulfurovaceae</taxon>
        <taxon>Sulfurovum</taxon>
    </lineage>
</organism>
<protein>
    <recommendedName>
        <fullName evidence="1">Large ribosomal subunit protein uL29</fullName>
    </recommendedName>
    <alternativeName>
        <fullName evidence="2">50S ribosomal protein L29</fullName>
    </alternativeName>
</protein>
<comment type="similarity">
    <text evidence="1">Belongs to the universal ribosomal protein uL29 family.</text>
</comment>
<reference key="1">
    <citation type="journal article" date="2007" name="Proc. Natl. Acad. Sci. U.S.A.">
        <title>Deep-sea vent epsilon-proteobacterial genomes provide insights into emergence of pathogens.</title>
        <authorList>
            <person name="Nakagawa S."/>
            <person name="Takaki Y."/>
            <person name="Shimamura S."/>
            <person name="Reysenbach A.-L."/>
            <person name="Takai K."/>
            <person name="Horikoshi K."/>
        </authorList>
    </citation>
    <scope>NUCLEOTIDE SEQUENCE [LARGE SCALE GENOMIC DNA]</scope>
    <source>
        <strain>NBC37-1</strain>
    </source>
</reference>
<gene>
    <name evidence="1" type="primary">rpmC</name>
    <name type="ordered locus">SUN_2329</name>
</gene>
<proteinExistence type="inferred from homology"/>
<evidence type="ECO:0000255" key="1">
    <source>
        <dbReference type="HAMAP-Rule" id="MF_00374"/>
    </source>
</evidence>
<evidence type="ECO:0000305" key="2"/>